<reference key="1">
    <citation type="journal article" date="2007" name="J. Bacteriol.">
        <title>The complete genome sequence of Bacillus thuringiensis Al Hakam.</title>
        <authorList>
            <person name="Challacombe J.F."/>
            <person name="Altherr M.R."/>
            <person name="Xie G."/>
            <person name="Bhotika S.S."/>
            <person name="Brown N."/>
            <person name="Bruce D."/>
            <person name="Campbell C.S."/>
            <person name="Campbell M.L."/>
            <person name="Chen J."/>
            <person name="Chertkov O."/>
            <person name="Cleland C."/>
            <person name="Dimitrijevic M."/>
            <person name="Doggett N.A."/>
            <person name="Fawcett J.J."/>
            <person name="Glavina T."/>
            <person name="Goodwin L.A."/>
            <person name="Green L.D."/>
            <person name="Han C.S."/>
            <person name="Hill K.K."/>
            <person name="Hitchcock P."/>
            <person name="Jackson P.J."/>
            <person name="Keim P."/>
            <person name="Kewalramani A.R."/>
            <person name="Longmire J."/>
            <person name="Lucas S."/>
            <person name="Malfatti S."/>
            <person name="Martinez D."/>
            <person name="McMurry K."/>
            <person name="Meincke L.J."/>
            <person name="Misra M."/>
            <person name="Moseman B.L."/>
            <person name="Mundt M."/>
            <person name="Munk A.C."/>
            <person name="Okinaka R.T."/>
            <person name="Parson-Quintana B."/>
            <person name="Reilly L.P."/>
            <person name="Richardson P."/>
            <person name="Robinson D.L."/>
            <person name="Saunders E."/>
            <person name="Tapia R."/>
            <person name="Tesmer J.G."/>
            <person name="Thayer N."/>
            <person name="Thompson L.S."/>
            <person name="Tice H."/>
            <person name="Ticknor L.O."/>
            <person name="Wills P.L."/>
            <person name="Gilna P."/>
            <person name="Brettin T.S."/>
        </authorList>
    </citation>
    <scope>NUCLEOTIDE SEQUENCE [LARGE SCALE GENOMIC DNA]</scope>
    <source>
        <strain>Al Hakam</strain>
    </source>
</reference>
<proteinExistence type="inferred from homology"/>
<gene>
    <name evidence="1" type="primary">atpG</name>
    <name type="ordered locus">BALH_4809</name>
</gene>
<feature type="chain" id="PRO_1000053158" description="ATP synthase gamma chain">
    <location>
        <begin position="1"/>
        <end position="286"/>
    </location>
</feature>
<protein>
    <recommendedName>
        <fullName evidence="1">ATP synthase gamma chain</fullName>
    </recommendedName>
    <alternativeName>
        <fullName evidence="1">ATP synthase F1 sector gamma subunit</fullName>
    </alternativeName>
    <alternativeName>
        <fullName evidence="1">F-ATPase gamma subunit</fullName>
    </alternativeName>
</protein>
<comment type="function">
    <text evidence="1">Produces ATP from ADP in the presence of a proton gradient across the membrane. The gamma chain is believed to be important in regulating ATPase activity and the flow of protons through the CF(0) complex.</text>
</comment>
<comment type="subunit">
    <text evidence="1">F-type ATPases have 2 components, CF(1) - the catalytic core - and CF(0) - the membrane proton channel. CF(1) has five subunits: alpha(3), beta(3), gamma(1), delta(1), epsilon(1). CF(0) has three main subunits: a, b and c.</text>
</comment>
<comment type="subcellular location">
    <subcellularLocation>
        <location evidence="1">Cell membrane</location>
        <topology evidence="1">Peripheral membrane protein</topology>
    </subcellularLocation>
</comment>
<comment type="similarity">
    <text evidence="1">Belongs to the ATPase gamma chain family.</text>
</comment>
<accession>A0RL96</accession>
<sequence length="286" mass="31606">MASLRDIKAKINSTKKTSQITKAMEMVSASKLNRAEQNAKSFVPYMEKIQEVVASIAQGSKGINHPMLNARPVKRTGYIVITSDRGLAGGYNSNVLRTVSNVIRERHNMDSNQYSIIVLGRLGRDYLKRRGFNIIDEVVGLSDHPSFTDIKDLASRAIAMFADGAYDELYIYYNHYVSKISQEVTENKILPLTDVASDKPTTAYEFEPSEEEILKVLLPQYAESLVYGALLDGKASEHAARMTAMKSATDNAMEVIDSLTLSFNRARQAAITQEITEIVGGAAALE</sequence>
<organism>
    <name type="scientific">Bacillus thuringiensis (strain Al Hakam)</name>
    <dbReference type="NCBI Taxonomy" id="412694"/>
    <lineage>
        <taxon>Bacteria</taxon>
        <taxon>Bacillati</taxon>
        <taxon>Bacillota</taxon>
        <taxon>Bacilli</taxon>
        <taxon>Bacillales</taxon>
        <taxon>Bacillaceae</taxon>
        <taxon>Bacillus</taxon>
        <taxon>Bacillus cereus group</taxon>
    </lineage>
</organism>
<evidence type="ECO:0000255" key="1">
    <source>
        <dbReference type="HAMAP-Rule" id="MF_00815"/>
    </source>
</evidence>
<keyword id="KW-0066">ATP synthesis</keyword>
<keyword id="KW-1003">Cell membrane</keyword>
<keyword id="KW-0139">CF(1)</keyword>
<keyword id="KW-0375">Hydrogen ion transport</keyword>
<keyword id="KW-0406">Ion transport</keyword>
<keyword id="KW-0472">Membrane</keyword>
<keyword id="KW-0813">Transport</keyword>
<dbReference type="EMBL" id="CP000485">
    <property type="protein sequence ID" value="ABK87989.1"/>
    <property type="molecule type" value="Genomic_DNA"/>
</dbReference>
<dbReference type="RefSeq" id="WP_000157696.1">
    <property type="nucleotide sequence ID" value="NC_008600.1"/>
</dbReference>
<dbReference type="SMR" id="A0RL96"/>
<dbReference type="GeneID" id="93005817"/>
<dbReference type="KEGG" id="btl:BALH_4809"/>
<dbReference type="HOGENOM" id="CLU_050669_0_1_9"/>
<dbReference type="GO" id="GO:0005886">
    <property type="term" value="C:plasma membrane"/>
    <property type="evidence" value="ECO:0007669"/>
    <property type="project" value="UniProtKB-SubCell"/>
</dbReference>
<dbReference type="GO" id="GO:0045259">
    <property type="term" value="C:proton-transporting ATP synthase complex"/>
    <property type="evidence" value="ECO:0007669"/>
    <property type="project" value="UniProtKB-KW"/>
</dbReference>
<dbReference type="GO" id="GO:0005524">
    <property type="term" value="F:ATP binding"/>
    <property type="evidence" value="ECO:0007669"/>
    <property type="project" value="UniProtKB-UniRule"/>
</dbReference>
<dbReference type="GO" id="GO:0046933">
    <property type="term" value="F:proton-transporting ATP synthase activity, rotational mechanism"/>
    <property type="evidence" value="ECO:0007669"/>
    <property type="project" value="UniProtKB-UniRule"/>
</dbReference>
<dbReference type="GO" id="GO:0042777">
    <property type="term" value="P:proton motive force-driven plasma membrane ATP synthesis"/>
    <property type="evidence" value="ECO:0007669"/>
    <property type="project" value="UniProtKB-UniRule"/>
</dbReference>
<dbReference type="CDD" id="cd12151">
    <property type="entry name" value="F1-ATPase_gamma"/>
    <property type="match status" value="1"/>
</dbReference>
<dbReference type="FunFam" id="3.40.1380.10:FF:000002">
    <property type="entry name" value="ATP synthase gamma chain"/>
    <property type="match status" value="1"/>
</dbReference>
<dbReference type="Gene3D" id="3.40.1380.10">
    <property type="match status" value="1"/>
</dbReference>
<dbReference type="Gene3D" id="1.10.287.80">
    <property type="entry name" value="ATP synthase, gamma subunit, helix hairpin domain"/>
    <property type="match status" value="1"/>
</dbReference>
<dbReference type="HAMAP" id="MF_00815">
    <property type="entry name" value="ATP_synth_gamma_bact"/>
    <property type="match status" value="1"/>
</dbReference>
<dbReference type="InterPro" id="IPR035968">
    <property type="entry name" value="ATP_synth_F1_ATPase_gsu"/>
</dbReference>
<dbReference type="InterPro" id="IPR000131">
    <property type="entry name" value="ATP_synth_F1_gsu"/>
</dbReference>
<dbReference type="InterPro" id="IPR023632">
    <property type="entry name" value="ATP_synth_F1_gsu_CS"/>
</dbReference>
<dbReference type="NCBIfam" id="TIGR01146">
    <property type="entry name" value="ATPsyn_F1gamma"/>
    <property type="match status" value="1"/>
</dbReference>
<dbReference type="PANTHER" id="PTHR11693">
    <property type="entry name" value="ATP SYNTHASE GAMMA CHAIN"/>
    <property type="match status" value="1"/>
</dbReference>
<dbReference type="PANTHER" id="PTHR11693:SF22">
    <property type="entry name" value="ATP SYNTHASE SUBUNIT GAMMA, MITOCHONDRIAL"/>
    <property type="match status" value="1"/>
</dbReference>
<dbReference type="Pfam" id="PF00231">
    <property type="entry name" value="ATP-synt"/>
    <property type="match status" value="1"/>
</dbReference>
<dbReference type="PRINTS" id="PR00126">
    <property type="entry name" value="ATPASEGAMMA"/>
</dbReference>
<dbReference type="SUPFAM" id="SSF52943">
    <property type="entry name" value="ATP synthase (F1-ATPase), gamma subunit"/>
    <property type="match status" value="1"/>
</dbReference>
<dbReference type="PROSITE" id="PS00153">
    <property type="entry name" value="ATPASE_GAMMA"/>
    <property type="match status" value="1"/>
</dbReference>
<name>ATPG_BACAH</name>